<gene>
    <name evidence="1" type="primary">rnhB</name>
    <name type="ordered locus">TDE_1547</name>
</gene>
<name>RNH2_TREDE</name>
<dbReference type="EC" id="3.1.26.4" evidence="1"/>
<dbReference type="EMBL" id="AE017226">
    <property type="protein sequence ID" value="AAS12064.1"/>
    <property type="molecule type" value="Genomic_DNA"/>
</dbReference>
<dbReference type="RefSeq" id="NP_972153.1">
    <property type="nucleotide sequence ID" value="NC_002967.9"/>
</dbReference>
<dbReference type="RefSeq" id="WP_010956988.1">
    <property type="nucleotide sequence ID" value="NC_002967.9"/>
</dbReference>
<dbReference type="SMR" id="Q73MG1"/>
<dbReference type="STRING" id="243275.TDE_1547"/>
<dbReference type="PaxDb" id="243275-TDE_1547"/>
<dbReference type="GeneID" id="2740909"/>
<dbReference type="KEGG" id="tde:TDE_1547"/>
<dbReference type="PATRIC" id="fig|243275.7.peg.1483"/>
<dbReference type="eggNOG" id="COG0164">
    <property type="taxonomic scope" value="Bacteria"/>
</dbReference>
<dbReference type="HOGENOM" id="CLU_036532_3_2_12"/>
<dbReference type="OrthoDB" id="9803420at2"/>
<dbReference type="Proteomes" id="UP000008212">
    <property type="component" value="Chromosome"/>
</dbReference>
<dbReference type="GO" id="GO:0005737">
    <property type="term" value="C:cytoplasm"/>
    <property type="evidence" value="ECO:0007669"/>
    <property type="project" value="UniProtKB-SubCell"/>
</dbReference>
<dbReference type="GO" id="GO:0032299">
    <property type="term" value="C:ribonuclease H2 complex"/>
    <property type="evidence" value="ECO:0007669"/>
    <property type="project" value="TreeGrafter"/>
</dbReference>
<dbReference type="GO" id="GO:0030145">
    <property type="term" value="F:manganese ion binding"/>
    <property type="evidence" value="ECO:0007669"/>
    <property type="project" value="UniProtKB-UniRule"/>
</dbReference>
<dbReference type="GO" id="GO:0003723">
    <property type="term" value="F:RNA binding"/>
    <property type="evidence" value="ECO:0007669"/>
    <property type="project" value="InterPro"/>
</dbReference>
<dbReference type="GO" id="GO:0004523">
    <property type="term" value="F:RNA-DNA hybrid ribonuclease activity"/>
    <property type="evidence" value="ECO:0007669"/>
    <property type="project" value="UniProtKB-UniRule"/>
</dbReference>
<dbReference type="GO" id="GO:0043137">
    <property type="term" value="P:DNA replication, removal of RNA primer"/>
    <property type="evidence" value="ECO:0007669"/>
    <property type="project" value="TreeGrafter"/>
</dbReference>
<dbReference type="GO" id="GO:0006298">
    <property type="term" value="P:mismatch repair"/>
    <property type="evidence" value="ECO:0007669"/>
    <property type="project" value="TreeGrafter"/>
</dbReference>
<dbReference type="CDD" id="cd07182">
    <property type="entry name" value="RNase_HII_bacteria_HII_like"/>
    <property type="match status" value="1"/>
</dbReference>
<dbReference type="Gene3D" id="3.30.420.10">
    <property type="entry name" value="Ribonuclease H-like superfamily/Ribonuclease H"/>
    <property type="match status" value="1"/>
</dbReference>
<dbReference type="HAMAP" id="MF_00052_B">
    <property type="entry name" value="RNase_HII_B"/>
    <property type="match status" value="1"/>
</dbReference>
<dbReference type="InterPro" id="IPR022898">
    <property type="entry name" value="RNase_HII"/>
</dbReference>
<dbReference type="InterPro" id="IPR001352">
    <property type="entry name" value="RNase_HII/HIII"/>
</dbReference>
<dbReference type="InterPro" id="IPR024567">
    <property type="entry name" value="RNase_HII/HIII_dom"/>
</dbReference>
<dbReference type="InterPro" id="IPR012337">
    <property type="entry name" value="RNaseH-like_sf"/>
</dbReference>
<dbReference type="InterPro" id="IPR036397">
    <property type="entry name" value="RNaseH_sf"/>
</dbReference>
<dbReference type="NCBIfam" id="NF000595">
    <property type="entry name" value="PRK00015.1-3"/>
    <property type="match status" value="1"/>
</dbReference>
<dbReference type="PANTHER" id="PTHR10954">
    <property type="entry name" value="RIBONUCLEASE H2 SUBUNIT A"/>
    <property type="match status" value="1"/>
</dbReference>
<dbReference type="PANTHER" id="PTHR10954:SF18">
    <property type="entry name" value="RIBONUCLEASE HII"/>
    <property type="match status" value="1"/>
</dbReference>
<dbReference type="Pfam" id="PF01351">
    <property type="entry name" value="RNase_HII"/>
    <property type="match status" value="1"/>
</dbReference>
<dbReference type="SUPFAM" id="SSF53098">
    <property type="entry name" value="Ribonuclease H-like"/>
    <property type="match status" value="1"/>
</dbReference>
<dbReference type="PROSITE" id="PS51975">
    <property type="entry name" value="RNASE_H_2"/>
    <property type="match status" value="1"/>
</dbReference>
<organism>
    <name type="scientific">Treponema denticola (strain ATCC 35405 / DSM 14222 / CIP 103919 / JCM 8153 / KCTC 15104)</name>
    <dbReference type="NCBI Taxonomy" id="243275"/>
    <lineage>
        <taxon>Bacteria</taxon>
        <taxon>Pseudomonadati</taxon>
        <taxon>Spirochaetota</taxon>
        <taxon>Spirochaetia</taxon>
        <taxon>Spirochaetales</taxon>
        <taxon>Treponemataceae</taxon>
        <taxon>Treponema</taxon>
    </lineage>
</organism>
<comment type="function">
    <text evidence="1">Endonuclease that specifically degrades the RNA of RNA-DNA hybrids.</text>
</comment>
<comment type="catalytic activity">
    <reaction evidence="1">
        <text>Endonucleolytic cleavage to 5'-phosphomonoester.</text>
        <dbReference type="EC" id="3.1.26.4"/>
    </reaction>
</comment>
<comment type="cofactor">
    <cofactor evidence="1">
        <name>Mn(2+)</name>
        <dbReference type="ChEBI" id="CHEBI:29035"/>
    </cofactor>
    <cofactor evidence="1">
        <name>Mg(2+)</name>
        <dbReference type="ChEBI" id="CHEBI:18420"/>
    </cofactor>
    <text evidence="1">Manganese or magnesium. Binds 1 divalent metal ion per monomer in the absence of substrate. May bind a second metal ion after substrate binding.</text>
</comment>
<comment type="subcellular location">
    <subcellularLocation>
        <location evidence="1">Cytoplasm</location>
    </subcellularLocation>
</comment>
<comment type="similarity">
    <text evidence="1">Belongs to the RNase HII family.</text>
</comment>
<sequence length="198" mass="22592">MLCGIDEAGRGPLAGPVTAAAVILPSSFDFSILKDSKKLTEKKREEVRKTIYADPNVIWAIGWASNYEIDEINILQATFLAMERAYEGLYLKLQEFCKLNNDKFIEPDIIVDGNFIPNIKNCSSIKALVKADDSVYEVMAASILAKTARDRMMIRYSWIYPEYGYEKHKGYGTKKHIEAIRFNGYSPIQRRSFFVKNL</sequence>
<protein>
    <recommendedName>
        <fullName evidence="1">Ribonuclease HII</fullName>
        <shortName evidence="1">RNase HII</shortName>
        <ecNumber evidence="1">3.1.26.4</ecNumber>
    </recommendedName>
</protein>
<proteinExistence type="inferred from homology"/>
<reference key="1">
    <citation type="journal article" date="2004" name="Proc. Natl. Acad. Sci. U.S.A.">
        <title>Comparison of the genome of the oral pathogen Treponema denticola with other spirochete genomes.</title>
        <authorList>
            <person name="Seshadri R."/>
            <person name="Myers G.S.A."/>
            <person name="Tettelin H."/>
            <person name="Eisen J.A."/>
            <person name="Heidelberg J.F."/>
            <person name="Dodson R.J."/>
            <person name="Davidsen T.M."/>
            <person name="DeBoy R.T."/>
            <person name="Fouts D.E."/>
            <person name="Haft D.H."/>
            <person name="Selengut J."/>
            <person name="Ren Q."/>
            <person name="Brinkac L.M."/>
            <person name="Madupu R."/>
            <person name="Kolonay J.F."/>
            <person name="Durkin S.A."/>
            <person name="Daugherty S.C."/>
            <person name="Shetty J."/>
            <person name="Shvartsbeyn A."/>
            <person name="Gebregeorgis E."/>
            <person name="Geer K."/>
            <person name="Tsegaye G."/>
            <person name="Malek J.A."/>
            <person name="Ayodeji B."/>
            <person name="Shatsman S."/>
            <person name="McLeod M.P."/>
            <person name="Smajs D."/>
            <person name="Howell J.K."/>
            <person name="Pal S."/>
            <person name="Amin A."/>
            <person name="Vashisth P."/>
            <person name="McNeill T.Z."/>
            <person name="Xiang Q."/>
            <person name="Sodergren E."/>
            <person name="Baca E."/>
            <person name="Weinstock G.M."/>
            <person name="Norris S.J."/>
            <person name="Fraser C.M."/>
            <person name="Paulsen I.T."/>
        </authorList>
    </citation>
    <scope>NUCLEOTIDE SEQUENCE [LARGE SCALE GENOMIC DNA]</scope>
    <source>
        <strain>ATCC 35405 / DSM 14222 / CIP 103919 / JCM 8153 / KCTC 15104</strain>
    </source>
</reference>
<evidence type="ECO:0000255" key="1">
    <source>
        <dbReference type="HAMAP-Rule" id="MF_00052"/>
    </source>
</evidence>
<evidence type="ECO:0000255" key="2">
    <source>
        <dbReference type="PROSITE-ProRule" id="PRU01319"/>
    </source>
</evidence>
<keyword id="KW-0963">Cytoplasm</keyword>
<keyword id="KW-0255">Endonuclease</keyword>
<keyword id="KW-0378">Hydrolase</keyword>
<keyword id="KW-0464">Manganese</keyword>
<keyword id="KW-0479">Metal-binding</keyword>
<keyword id="KW-0540">Nuclease</keyword>
<keyword id="KW-1185">Reference proteome</keyword>
<feature type="chain" id="PRO_0000235788" description="Ribonuclease HII">
    <location>
        <begin position="1"/>
        <end position="198"/>
    </location>
</feature>
<feature type="domain" description="RNase H type-2" evidence="2">
    <location>
        <begin position="1"/>
        <end position="198"/>
    </location>
</feature>
<feature type="binding site" evidence="1">
    <location>
        <position position="6"/>
    </location>
    <ligand>
        <name>a divalent metal cation</name>
        <dbReference type="ChEBI" id="CHEBI:60240"/>
    </ligand>
</feature>
<feature type="binding site" evidence="1">
    <location>
        <position position="7"/>
    </location>
    <ligand>
        <name>a divalent metal cation</name>
        <dbReference type="ChEBI" id="CHEBI:60240"/>
    </ligand>
</feature>
<feature type="binding site" evidence="1">
    <location>
        <position position="112"/>
    </location>
    <ligand>
        <name>a divalent metal cation</name>
        <dbReference type="ChEBI" id="CHEBI:60240"/>
    </ligand>
</feature>
<accession>Q73MG1</accession>